<gene>
    <name evidence="1" type="primary">rgy</name>
    <name type="ordered locus">MJ1512</name>
</gene>
<sequence length="1613" mass="188257">MIPMIYKEMCPNCNGEITSERLAIGVCEKCLKEENVFEKLKLCEKLREEKTLKNLKDYCIIWNEFKEFEEFVKDLGFELLSIQKMWAKRVLKNKSFSIVVPTGVGKSFFGILMSLFLAKKGKRCYIILPTTLLVKQTYEKISSLTEKNNLNIRVVAYHSELSTKEKKEVKERIENNDYDVLITTSNYLTKNMPKCKFDFVFVDDVDALLKASKNIDRTLKLLGFDEEIINEAYKIIYLIKIGKIEDAMKKREILKKKISKIKHGCLIIASATGKSYGDRVKLYRELLDFEIGFGMNKLRDVVDIYDEEFSKEKILEYIKLFGSGGIVFVSIDYGVEKAQEIEKYLLENNIKAKLIHSKDKKGFDDFREGKIDVLIGVASYYGVLVRGLDMPERVRYAIFYGIPKFKIRLKEYINSLKEKGELKEDINIEGKTEEEIRQIITEKLKIKNFSLRKEDDEYLLLIPDVKTYIQASGRTSRMTEFGLTKGASIVLVDEKEIFEALKKYMLFMYESEFKRIDEVNLEELIKKIDEDREKIKVGRAKGKVPDLLKSVLMVVESPNKARTIANFFGKPSVRKINNRNVYEVCIGDLNLIITASGGHVFDLVTKEGFYGVKIENNLYIPIYTSIKKVNGEQFTDQKDLEELIKQLMEKGERVNAMDAKENIEIIREIADEVDAIFIATDIDTEGEKIGYDIAINALPFNRNIYRVGFNEITKRAILKAVESFKKGEELSLDENKVKGQVVRRIEDRWIGFRLSQKLWEVFNKNYLSAGRVQTPVLGWIIERYNEHKIKVPYLSLKLENDIYIGKIWEDEFDKDEVEVEVKVYEKEIPPLPPFTTDTLLEEATKRFGLSTDEIMSIAQELFELGLCLTPDTYVVLGDGRIETIEDIVNAKERNVLSLDLDNLSIKIDTAIKFWKLRYNGNLSKITLSNNYELKATPDHCLLVLRDNQLKWIPAKDIKENDYIAMPFNYKVERKPISLLNLLKYLDITDVLIEFDENSTIFEKIAEYIRNNIKTSTKYKYLRNRRVPLKYLIEWNFDLDEIEKEAKYIYKSVAGTKKIPLFKLDERFWYFAGLVLGDGSIQDSKIRIAQTPLKDVKSILDETFPFLHNWISGNQVIISNPIIAEILEKLGMRNGKLNGIIFSLPESYINALIAGYFDTDGCFSLLYDKKAKKHNLRMVLTSKRRDVLEKIGIYLNSIGILNTLHKSREVYSLIISNKSLETFKEKIAKYLKIRKEAFINGYKTYKKEHEERFECDLLPVKEVFKKLTFEKGRKEILKDSKIHIENWYKEKTNNIPREKLKTVLRYANNSEHKEFLEKIVNGDISFVRVKKVENIPYDGYVYDLSIKHNQNFISNGVISHNCTYHRTSSTRVSLDGMRVAREYLKLNNLEDYLKNREYFMEGAHECIRPTKPMNTDELIEFLKENNIKLTKNHIKVYDLIFRRFIASQMKEAVVEYEEIYIKDLDEKVEGYVDIKFDGWSRIYNLKLKKLPRIEKSSLKVLDKKLRKIPKVPLYDEGEVVKLMKERGIGRPSTYAQIIKKLLDRGYVVKSKDKNKLIPTKLGIEVYNYLINNYPHLISEERTRELEEIMDKIENGEVDYIEVLKALHEEILSIR</sequence>
<comment type="function">
    <text evidence="1">Modifies the topological state of DNA by introducing positive supercoils in an ATP-dependent process, increasing the linking number in steps of +1. Binds to single-stranded DNA, transiently cleaves and then rejoins the ends, introducing a positive supercoil in the process. The scissile phosphodiester is attacked by the catalytic tyrosine of the enzyme, resulting in the formation of a DNA-(5'-phosphotyrosyl)-enzyme intermediate. Probably involved in rewinding DNA strands in regions of the chromosome that have opened up to allow replication, transcription, DNA repair and/or for DNA protection.</text>
</comment>
<comment type="catalytic activity">
    <reaction evidence="1">
        <text>ATP + H2O = ADP + phosphate + H(+)</text>
        <dbReference type="Rhea" id="RHEA:13065"/>
        <dbReference type="ChEBI" id="CHEBI:15377"/>
        <dbReference type="ChEBI" id="CHEBI:15378"/>
        <dbReference type="ChEBI" id="CHEBI:30616"/>
        <dbReference type="ChEBI" id="CHEBI:43474"/>
        <dbReference type="ChEBI" id="CHEBI:456216"/>
    </reaction>
</comment>
<comment type="cofactor">
    <cofactor evidence="1">
        <name>Zn(2+)</name>
        <dbReference type="ChEBI" id="CHEBI:29105"/>
    </cofactor>
    <text evidence="1">Binds 1 zinc ion per subunit.</text>
</comment>
<comment type="cofactor">
    <cofactor evidence="1">
        <name>Mg(2+)</name>
        <dbReference type="ChEBI" id="CHEBI:18420"/>
    </cofactor>
</comment>
<comment type="subunit">
    <text evidence="1">Monomer.</text>
</comment>
<comment type="subcellular location">
    <subcellularLocation>
        <location evidence="1">Cytoplasm</location>
    </subcellularLocation>
</comment>
<comment type="domain">
    <text evidence="1">Introduction of positive supercoils requires the cooperation of both domains. The helicase-like domain probably does not directly unwind DNA, but more likely acts by driving ATP-dependent conformational changes within the whole enzyme. A beta hairpin in the 'latch' region of the N-terminal domain plays a regulatory role in the enzyme, repressing topoisomerase activity in the absence of ATP and preventing the enzyme from acting as an ATP-independent relaxing enzyme; it also helps to coordinate nucleotide hydrolysis by the ATPase domain with the supercoiling activity of the topoisomerase domain.</text>
</comment>
<comment type="PTM">
    <text evidence="4">This protein undergoes a protein self splicing that involves a post-translational excision of the intervening region (intein) followed by peptide ligation.</text>
</comment>
<comment type="miscellaneous">
    <text evidence="1">This enzyme is the only unique feature of hyperthermophilic bacteria/archaea known and seems to be essential for adaptation to life at high temperatures. It may play a role in stabilization of DNA at high temperatures.</text>
</comment>
<comment type="similarity">
    <text evidence="1">In the N-terminal section; belongs to the DEAD box helicase family. DDVD subfamily.</text>
</comment>
<comment type="similarity">
    <text evidence="1">In the C-terminal section; belongs to the type IA topoisomerase family.</text>
</comment>
<name>RGYR_METJA</name>
<organism>
    <name type="scientific">Methanocaldococcus jannaschii (strain ATCC 43067 / DSM 2661 / JAL-1 / JCM 10045 / NBRC 100440)</name>
    <name type="common">Methanococcus jannaschii</name>
    <dbReference type="NCBI Taxonomy" id="243232"/>
    <lineage>
        <taxon>Archaea</taxon>
        <taxon>Methanobacteriati</taxon>
        <taxon>Methanobacteriota</taxon>
        <taxon>Methanomada group</taxon>
        <taxon>Methanococci</taxon>
        <taxon>Methanococcales</taxon>
        <taxon>Methanocaldococcaceae</taxon>
        <taxon>Methanocaldococcus</taxon>
    </lineage>
</organism>
<keyword id="KW-0067">ATP-binding</keyword>
<keyword id="KW-0068">Autocatalytic cleavage</keyword>
<keyword id="KW-0963">Cytoplasm</keyword>
<keyword id="KW-0238">DNA-binding</keyword>
<keyword id="KW-0413">Isomerase</keyword>
<keyword id="KW-0460">Magnesium</keyword>
<keyword id="KW-0479">Metal-binding</keyword>
<keyword id="KW-0547">Nucleotide-binding</keyword>
<keyword id="KW-0651">Protein splicing</keyword>
<keyword id="KW-1185">Reference proteome</keyword>
<keyword id="KW-0799">Topoisomerase</keyword>
<keyword id="KW-0862">Zinc</keyword>
<keyword id="KW-0863">Zinc-finger</keyword>
<proteinExistence type="inferred from homology"/>
<feature type="chain" id="PRO_0000459347" description="Reverse gyrase">
    <location>
        <begin position="1"/>
        <end position="1613"/>
    </location>
</feature>
<feature type="chain" id="PRO_0000030353" description="Reverse gyrase, 1st part">
    <location>
        <begin position="1"/>
        <end position="866"/>
    </location>
</feature>
<feature type="chain" id="PRO_0000030354" description="Mja r-Gyr intein">
    <location>
        <begin position="867"/>
        <end position="1360"/>
    </location>
</feature>
<feature type="chain" id="PRO_0000030355" description="Reverse gyrase, 2nd part">
    <location>
        <begin position="1361"/>
        <end position="1613"/>
    </location>
</feature>
<feature type="domain" description="Helicase ATP-binding" evidence="1">
    <location>
        <begin position="87"/>
        <end position="291"/>
    </location>
</feature>
<feature type="domain" description="Helicase C-terminal" evidence="1">
    <location>
        <begin position="310"/>
        <end position="525"/>
    </location>
</feature>
<feature type="domain" description="Toprim" evidence="1">
    <location>
        <begin position="550"/>
        <end position="712"/>
    </location>
</feature>
<feature type="domain" description="Topo IA-type catalytic" evidence="3">
    <location>
        <begin position="733"/>
        <end position="1613"/>
    </location>
</feature>
<feature type="domain" description="DOD-type homing endonuclease">
    <location>
        <begin position="1070"/>
        <end position="1199"/>
    </location>
</feature>
<feature type="zinc finger region" description="RG N-terminal-type" evidence="2">
    <location>
        <begin position="1"/>
        <end position="38"/>
    </location>
</feature>
<feature type="region of interest" description="Topoisomerase I" evidence="1">
    <location>
        <begin position="546"/>
        <end position="1613"/>
    </location>
</feature>
<feature type="short sequence motif" description="DEAD box" evidence="1">
    <location>
        <begin position="203"/>
        <end position="206"/>
    </location>
</feature>
<feature type="active site" description="O-(5'-phospho-DNA)-tyrosine intermediate" evidence="3">
    <location>
        <position position="1363"/>
    </location>
</feature>
<feature type="binding site" evidence="1">
    <location>
        <position position="10"/>
    </location>
    <ligand>
        <name>Zn(2+)</name>
        <dbReference type="ChEBI" id="CHEBI:29105"/>
    </ligand>
</feature>
<feature type="binding site" evidence="1">
    <location>
        <position position="13"/>
    </location>
    <ligand>
        <name>Zn(2+)</name>
        <dbReference type="ChEBI" id="CHEBI:29105"/>
    </ligand>
</feature>
<feature type="binding site" evidence="1">
    <location>
        <position position="27"/>
    </location>
    <ligand>
        <name>Zn(2+)</name>
        <dbReference type="ChEBI" id="CHEBI:29105"/>
    </ligand>
</feature>
<feature type="binding site" evidence="1">
    <location>
        <position position="30"/>
    </location>
    <ligand>
        <name>Zn(2+)</name>
        <dbReference type="ChEBI" id="CHEBI:29105"/>
    </ligand>
</feature>
<feature type="binding site" evidence="1">
    <location>
        <position position="83"/>
    </location>
    <ligand>
        <name>ATP</name>
        <dbReference type="ChEBI" id="CHEBI:30616"/>
    </ligand>
</feature>
<feature type="binding site" evidence="1">
    <location>
        <begin position="100"/>
        <end position="107"/>
    </location>
    <ligand>
        <name>ATP</name>
        <dbReference type="ChEBI" id="CHEBI:30616"/>
    </ligand>
</feature>
<feature type="binding site" evidence="1">
    <location>
        <position position="556"/>
    </location>
    <ligand>
        <name>Mg(2+)</name>
        <dbReference type="ChEBI" id="CHEBI:18420"/>
        <note>catalytic</note>
    </ligand>
</feature>
<feature type="binding site" evidence="1">
    <location>
        <position position="681"/>
    </location>
    <ligand>
        <name>Mg(2+)</name>
        <dbReference type="ChEBI" id="CHEBI:18420"/>
        <note>catalytic</note>
    </ligand>
</feature>
<evidence type="ECO:0000255" key="1">
    <source>
        <dbReference type="HAMAP-Rule" id="MF_01125"/>
    </source>
</evidence>
<evidence type="ECO:0000255" key="2">
    <source>
        <dbReference type="PROSITE-ProRule" id="PRU01380"/>
    </source>
</evidence>
<evidence type="ECO:0000255" key="3">
    <source>
        <dbReference type="PROSITE-ProRule" id="PRU01383"/>
    </source>
</evidence>
<evidence type="ECO:0000305" key="4"/>
<dbReference type="EC" id="5.6.2.-" evidence="1"/>
<dbReference type="EMBL" id="L77117">
    <property type="protein sequence ID" value="AAB99531.1"/>
    <property type="molecule type" value="Genomic_DNA"/>
</dbReference>
<dbReference type="PIR" id="G64488">
    <property type="entry name" value="G64488"/>
</dbReference>
<dbReference type="RefSeq" id="WP_010871035.1">
    <property type="nucleotide sequence ID" value="NC_000909.1"/>
</dbReference>
<dbReference type="SMR" id="Q58907"/>
<dbReference type="STRING" id="243232.MJ_1512"/>
<dbReference type="PaxDb" id="243232-MJ_1512"/>
<dbReference type="EnsemblBacteria" id="AAB99531">
    <property type="protein sequence ID" value="AAB99531"/>
    <property type="gene ID" value="MJ_1512"/>
</dbReference>
<dbReference type="GeneID" id="1452419"/>
<dbReference type="KEGG" id="mja:MJ_1512"/>
<dbReference type="eggNOG" id="arCOG01526">
    <property type="taxonomic scope" value="Archaea"/>
</dbReference>
<dbReference type="eggNOG" id="arCOG03145">
    <property type="taxonomic scope" value="Archaea"/>
</dbReference>
<dbReference type="HOGENOM" id="CLU_002886_0_0_2"/>
<dbReference type="InParanoid" id="Q58907"/>
<dbReference type="OrthoDB" id="30963at2157"/>
<dbReference type="PhylomeDB" id="Q58907"/>
<dbReference type="Proteomes" id="UP000000805">
    <property type="component" value="Chromosome"/>
</dbReference>
<dbReference type="GO" id="GO:0005737">
    <property type="term" value="C:cytoplasm"/>
    <property type="evidence" value="ECO:0007669"/>
    <property type="project" value="UniProtKB-SubCell"/>
</dbReference>
<dbReference type="GO" id="GO:0005524">
    <property type="term" value="F:ATP binding"/>
    <property type="evidence" value="ECO:0007669"/>
    <property type="project" value="UniProtKB-UniRule"/>
</dbReference>
<dbReference type="GO" id="GO:0016887">
    <property type="term" value="F:ATP hydrolysis activity"/>
    <property type="evidence" value="ECO:0007669"/>
    <property type="project" value="RHEA"/>
</dbReference>
<dbReference type="GO" id="GO:0003677">
    <property type="term" value="F:DNA binding"/>
    <property type="evidence" value="ECO:0007669"/>
    <property type="project" value="UniProtKB-UniRule"/>
</dbReference>
<dbReference type="GO" id="GO:0003918">
    <property type="term" value="F:DNA topoisomerase type II (double strand cut, ATP-hydrolyzing) activity"/>
    <property type="evidence" value="ECO:0007669"/>
    <property type="project" value="UniProtKB-EC"/>
</dbReference>
<dbReference type="GO" id="GO:0004519">
    <property type="term" value="F:endonuclease activity"/>
    <property type="evidence" value="ECO:0007669"/>
    <property type="project" value="InterPro"/>
</dbReference>
<dbReference type="GO" id="GO:0160097">
    <property type="term" value="F:reverse gyrase activity"/>
    <property type="evidence" value="ECO:0007669"/>
    <property type="project" value="UniProtKB-UniRule"/>
</dbReference>
<dbReference type="GO" id="GO:0008270">
    <property type="term" value="F:zinc ion binding"/>
    <property type="evidence" value="ECO:0007669"/>
    <property type="project" value="UniProtKB-UniRule"/>
</dbReference>
<dbReference type="GO" id="GO:0006265">
    <property type="term" value="P:DNA topological change"/>
    <property type="evidence" value="ECO:0007669"/>
    <property type="project" value="UniProtKB-UniRule"/>
</dbReference>
<dbReference type="GO" id="GO:0016539">
    <property type="term" value="P:intein-mediated protein splicing"/>
    <property type="evidence" value="ECO:0007669"/>
    <property type="project" value="InterPro"/>
</dbReference>
<dbReference type="CDD" id="cd17924">
    <property type="entry name" value="DDXDc_reverse_gyrase"/>
    <property type="match status" value="1"/>
</dbReference>
<dbReference type="CDD" id="cd00081">
    <property type="entry name" value="Hint"/>
    <property type="match status" value="2"/>
</dbReference>
<dbReference type="CDD" id="cd18798">
    <property type="entry name" value="SF2_C_reverse_gyrase"/>
    <property type="match status" value="1"/>
</dbReference>
<dbReference type="CDD" id="cd00186">
    <property type="entry name" value="TOP1Ac"/>
    <property type="match status" value="1"/>
</dbReference>
<dbReference type="CDD" id="cd03361">
    <property type="entry name" value="TOPRIM_TopoIA_RevGyr"/>
    <property type="match status" value="1"/>
</dbReference>
<dbReference type="Gene3D" id="3.40.50.140">
    <property type="match status" value="1"/>
</dbReference>
<dbReference type="Gene3D" id="2.170.16.10">
    <property type="entry name" value="Hedgehog/Intein (Hint) domain"/>
    <property type="match status" value="2"/>
</dbReference>
<dbReference type="Gene3D" id="3.10.28.10">
    <property type="entry name" value="Homing endonucleases"/>
    <property type="match status" value="1"/>
</dbReference>
<dbReference type="Gene3D" id="3.40.50.300">
    <property type="entry name" value="P-loop containing nucleotide triphosphate hydrolases"/>
    <property type="match status" value="3"/>
</dbReference>
<dbReference type="Gene3D" id="1.10.460.10">
    <property type="entry name" value="Topoisomerase I, domain 2"/>
    <property type="match status" value="2"/>
</dbReference>
<dbReference type="Gene3D" id="1.10.290.10">
    <property type="entry name" value="Topoisomerase I, domain 4"/>
    <property type="match status" value="2"/>
</dbReference>
<dbReference type="HAMAP" id="MF_01125">
    <property type="entry name" value="Reverse_gyrase"/>
    <property type="match status" value="1"/>
</dbReference>
<dbReference type="InterPro" id="IPR011545">
    <property type="entry name" value="DEAD/DEAH_box_helicase_dom"/>
</dbReference>
<dbReference type="InterPro" id="IPR014001">
    <property type="entry name" value="Helicase_ATP-bd"/>
</dbReference>
<dbReference type="InterPro" id="IPR001650">
    <property type="entry name" value="Helicase_C-like"/>
</dbReference>
<dbReference type="InterPro" id="IPR003586">
    <property type="entry name" value="Hint_dom_C"/>
</dbReference>
<dbReference type="InterPro" id="IPR003587">
    <property type="entry name" value="Hint_dom_N"/>
</dbReference>
<dbReference type="InterPro" id="IPR036844">
    <property type="entry name" value="Hint_dom_sf"/>
</dbReference>
<dbReference type="InterPro" id="IPR027434">
    <property type="entry name" value="Homing_endonucl"/>
</dbReference>
<dbReference type="InterPro" id="IPR006142">
    <property type="entry name" value="INTEIN"/>
</dbReference>
<dbReference type="InterPro" id="IPR030934">
    <property type="entry name" value="Intein_C"/>
</dbReference>
<dbReference type="InterPro" id="IPR004042">
    <property type="entry name" value="Intein_endonuc_central"/>
</dbReference>
<dbReference type="InterPro" id="IPR006141">
    <property type="entry name" value="Intein_N"/>
</dbReference>
<dbReference type="InterPro" id="IPR004860">
    <property type="entry name" value="LAGLIDADG_dom"/>
</dbReference>
<dbReference type="InterPro" id="IPR027417">
    <property type="entry name" value="P-loop_NTPase"/>
</dbReference>
<dbReference type="InterPro" id="IPR005736">
    <property type="entry name" value="Reverse_gyrase"/>
</dbReference>
<dbReference type="InterPro" id="IPR003601">
    <property type="entry name" value="Topo_IA_2"/>
</dbReference>
<dbReference type="InterPro" id="IPR013497">
    <property type="entry name" value="Topo_IA_cen"/>
</dbReference>
<dbReference type="InterPro" id="IPR013824">
    <property type="entry name" value="Topo_IA_cen_sub1"/>
</dbReference>
<dbReference type="InterPro" id="IPR013826">
    <property type="entry name" value="Topo_IA_cen_sub3"/>
</dbReference>
<dbReference type="InterPro" id="IPR023405">
    <property type="entry name" value="Topo_IA_core_domain"/>
</dbReference>
<dbReference type="InterPro" id="IPR003602">
    <property type="entry name" value="Topo_IA_DNA-bd_dom"/>
</dbReference>
<dbReference type="InterPro" id="IPR006171">
    <property type="entry name" value="TOPRIM_dom"/>
</dbReference>
<dbReference type="InterPro" id="IPR034142">
    <property type="entry name" value="TOPRIM_RevGyr"/>
</dbReference>
<dbReference type="InterPro" id="IPR040569">
    <property type="entry name" value="Znf_Rg"/>
</dbReference>
<dbReference type="NCBIfam" id="TIGR01443">
    <property type="entry name" value="intein_Cterm"/>
    <property type="match status" value="1"/>
</dbReference>
<dbReference type="NCBIfam" id="TIGR01445">
    <property type="entry name" value="intein_Nterm"/>
    <property type="match status" value="1"/>
</dbReference>
<dbReference type="NCBIfam" id="TIGR01054">
    <property type="entry name" value="rgy"/>
    <property type="match status" value="1"/>
</dbReference>
<dbReference type="PANTHER" id="PTHR43505">
    <property type="entry name" value="REVERSE GYRASE"/>
    <property type="match status" value="1"/>
</dbReference>
<dbReference type="PANTHER" id="PTHR43505:SF1">
    <property type="entry name" value="REVERSE GYRASE"/>
    <property type="match status" value="1"/>
</dbReference>
<dbReference type="Pfam" id="PF00270">
    <property type="entry name" value="DEAD"/>
    <property type="match status" value="1"/>
</dbReference>
<dbReference type="Pfam" id="PF14890">
    <property type="entry name" value="Intein_splicing"/>
    <property type="match status" value="1"/>
</dbReference>
<dbReference type="Pfam" id="PF14528">
    <property type="entry name" value="LAGLIDADG_3"/>
    <property type="match status" value="1"/>
</dbReference>
<dbReference type="Pfam" id="PF01131">
    <property type="entry name" value="Topoisom_bac"/>
    <property type="match status" value="2"/>
</dbReference>
<dbReference type="Pfam" id="PF01751">
    <property type="entry name" value="Toprim"/>
    <property type="match status" value="1"/>
</dbReference>
<dbReference type="Pfam" id="PF17915">
    <property type="entry name" value="zf_Rg"/>
    <property type="match status" value="1"/>
</dbReference>
<dbReference type="PRINTS" id="PR00379">
    <property type="entry name" value="INTEIN"/>
</dbReference>
<dbReference type="PRINTS" id="PR00417">
    <property type="entry name" value="PRTPISMRASEI"/>
</dbReference>
<dbReference type="SMART" id="SM00487">
    <property type="entry name" value="DEXDc"/>
    <property type="match status" value="1"/>
</dbReference>
<dbReference type="SMART" id="SM00490">
    <property type="entry name" value="HELICc"/>
    <property type="match status" value="1"/>
</dbReference>
<dbReference type="SMART" id="SM00305">
    <property type="entry name" value="HintC"/>
    <property type="match status" value="1"/>
</dbReference>
<dbReference type="SMART" id="SM00306">
    <property type="entry name" value="HintN"/>
    <property type="match status" value="1"/>
</dbReference>
<dbReference type="SMART" id="SM00437">
    <property type="entry name" value="TOP1Ac"/>
    <property type="match status" value="1"/>
</dbReference>
<dbReference type="SMART" id="SM00436">
    <property type="entry name" value="TOP1Bc"/>
    <property type="match status" value="1"/>
</dbReference>
<dbReference type="SMART" id="SM00493">
    <property type="entry name" value="TOPRIM"/>
    <property type="match status" value="1"/>
</dbReference>
<dbReference type="SUPFAM" id="SSF51294">
    <property type="entry name" value="Hedgehog/intein (Hint) domain"/>
    <property type="match status" value="1"/>
</dbReference>
<dbReference type="SUPFAM" id="SSF55608">
    <property type="entry name" value="Homing endonucleases"/>
    <property type="match status" value="1"/>
</dbReference>
<dbReference type="SUPFAM" id="SSF52540">
    <property type="entry name" value="P-loop containing nucleoside triphosphate hydrolases"/>
    <property type="match status" value="2"/>
</dbReference>
<dbReference type="SUPFAM" id="SSF56712">
    <property type="entry name" value="Prokaryotic type I DNA topoisomerase"/>
    <property type="match status" value="2"/>
</dbReference>
<dbReference type="PROSITE" id="PS51192">
    <property type="entry name" value="HELICASE_ATP_BIND_1"/>
    <property type="match status" value="1"/>
</dbReference>
<dbReference type="PROSITE" id="PS51194">
    <property type="entry name" value="HELICASE_CTER"/>
    <property type="match status" value="1"/>
</dbReference>
<dbReference type="PROSITE" id="PS50818">
    <property type="entry name" value="INTEIN_C_TER"/>
    <property type="match status" value="1"/>
</dbReference>
<dbReference type="PROSITE" id="PS50819">
    <property type="entry name" value="INTEIN_ENDONUCLEASE"/>
    <property type="match status" value="1"/>
</dbReference>
<dbReference type="PROSITE" id="PS50817">
    <property type="entry name" value="INTEIN_N_TER"/>
    <property type="match status" value="1"/>
</dbReference>
<dbReference type="PROSITE" id="PS52039">
    <property type="entry name" value="TOPO_IA_2"/>
    <property type="match status" value="1"/>
</dbReference>
<dbReference type="PROSITE" id="PS50880">
    <property type="entry name" value="TOPRIM"/>
    <property type="match status" value="1"/>
</dbReference>
<dbReference type="PROSITE" id="PS52036">
    <property type="entry name" value="ZF_RG_N"/>
    <property type="match status" value="1"/>
</dbReference>
<accession>Q58907</accession>
<reference key="1">
    <citation type="journal article" date="1996" name="Science">
        <title>Complete genome sequence of the methanogenic archaeon, Methanococcus jannaschii.</title>
        <authorList>
            <person name="Bult C.J."/>
            <person name="White O."/>
            <person name="Olsen G.J."/>
            <person name="Zhou L."/>
            <person name="Fleischmann R.D."/>
            <person name="Sutton G.G."/>
            <person name="Blake J.A."/>
            <person name="FitzGerald L.M."/>
            <person name="Clayton R.A."/>
            <person name="Gocayne J.D."/>
            <person name="Kerlavage A.R."/>
            <person name="Dougherty B.A."/>
            <person name="Tomb J.-F."/>
            <person name="Adams M.D."/>
            <person name="Reich C.I."/>
            <person name="Overbeek R."/>
            <person name="Kirkness E.F."/>
            <person name="Weinstock K.G."/>
            <person name="Merrick J.M."/>
            <person name="Glodek A."/>
            <person name="Scott J.L."/>
            <person name="Geoghagen N.S.M."/>
            <person name="Weidman J.F."/>
            <person name="Fuhrmann J.L."/>
            <person name="Nguyen D."/>
            <person name="Utterback T.R."/>
            <person name="Kelley J.M."/>
            <person name="Peterson J.D."/>
            <person name="Sadow P.W."/>
            <person name="Hanna M.C."/>
            <person name="Cotton M.D."/>
            <person name="Roberts K.M."/>
            <person name="Hurst M.A."/>
            <person name="Kaine B.P."/>
            <person name="Borodovsky M."/>
            <person name="Klenk H.-P."/>
            <person name="Fraser C.M."/>
            <person name="Smith H.O."/>
            <person name="Woese C.R."/>
            <person name="Venter J.C."/>
        </authorList>
    </citation>
    <scope>NUCLEOTIDE SEQUENCE [LARGE SCALE GENOMIC DNA]</scope>
    <source>
        <strain>ATCC 43067 / DSM 2661 / JAL-1 / JCM 10045 / NBRC 100440</strain>
    </source>
</reference>
<protein>
    <recommendedName>
        <fullName evidence="1">Reverse gyrase</fullName>
        <ecNumber evidence="1">5.6.2.-</ecNumber>
    </recommendedName>
    <component>
        <recommendedName>
            <fullName>Mja r-Gyr intein</fullName>
        </recommendedName>
    </component>
</protein>